<gene>
    <name evidence="1" type="primary">napD</name>
    <name type="synonym">yojF</name>
    <name type="ordered locus">b2207</name>
    <name type="ordered locus">JW2195</name>
</gene>
<sequence length="87" mass="9469">MHTNWQVCSLVVQAKSERISDISTQLNAFPGCEVAVSDAPSGQLIVVVEAEDSETLIQTIESVRNVEGVLAVSLVYHQQEEQGEETP</sequence>
<proteinExistence type="evidence at protein level"/>
<evidence type="ECO:0000255" key="1">
    <source>
        <dbReference type="HAMAP-Rule" id="MF_02200"/>
    </source>
</evidence>
<evidence type="ECO:0000269" key="2">
    <source>
    </source>
</evidence>
<evidence type="ECO:0000269" key="3">
    <source>
    </source>
</evidence>
<evidence type="ECO:0000269" key="4">
    <source>
    </source>
</evidence>
<evidence type="ECO:0000269" key="5">
    <source>
    </source>
</evidence>
<evidence type="ECO:0000269" key="6">
    <source ref="9"/>
</evidence>
<evidence type="ECO:0000305" key="7"/>
<evidence type="ECO:0007744" key="8">
    <source>
        <dbReference type="PDB" id="2JSX"/>
    </source>
</evidence>
<evidence type="ECO:0007744" key="9">
    <source>
        <dbReference type="PDB" id="2PQ4"/>
    </source>
</evidence>
<evidence type="ECO:0007829" key="10">
    <source>
        <dbReference type="PDB" id="2JSX"/>
    </source>
</evidence>
<evidence type="ECO:0007829" key="11">
    <source>
        <dbReference type="PDB" id="2PQ4"/>
    </source>
</evidence>
<comment type="function">
    <text evidence="3 4 5">Chaperone for NapA, the catalytic subunit of the periplasmic nitrate reductase. It binds directly and specifically to the twin-arginine signal peptide of NapA, preventing premature interaction with the Tat translocase and premature export (PubMed:17901208, PubMed:22329966). May have a role in the insertion of the NapA molybdenum cofactor (PubMed:24314029).</text>
</comment>
<comment type="subunit">
    <text evidence="3 4 5 6">Monomer in solution (PubMed:17901208). Interacts with the cytoplasmic NapA precursor (PubMed:17901208, PubMed:22329966, PubMed:24314029, Ref.9).</text>
</comment>
<comment type="interaction">
    <interactant intactId="EBI-554985">
        <id>P0A9I5</id>
    </interactant>
    <interactant intactId="EBI-554952">
        <id>P33937</id>
        <label>napA</label>
    </interactant>
    <organismsDiffer>false</organismsDiffer>
    <experiments>11</experiments>
</comment>
<comment type="interaction">
    <interactant intactId="EBI-554985">
        <id>P0A9I5</id>
    </interactant>
    <interactant intactId="EBI-555015">
        <id>P0A9M8</id>
        <label>pta</label>
    </interactant>
    <organismsDiffer>false</organismsDiffer>
    <experiments>3</experiments>
</comment>
<comment type="interaction">
    <interactant intactId="EBI-554985">
        <id>P0A9I5</id>
    </interactant>
    <interactant intactId="EBI-370752">
        <id>P0A8E7</id>
        <label>yajQ</label>
    </interactant>
    <organismsDiffer>false</organismsDiffer>
    <experiments>4</experiments>
</comment>
<comment type="subcellular location">
    <subcellularLocation>
        <location evidence="1 3">Cytoplasm</location>
    </subcellularLocation>
</comment>
<comment type="disruption phenotype">
    <text evidence="2">Deletion mutant lacks periplasmic nitrate reductase activity, with either glycerol or formate as the electron donor.</text>
</comment>
<comment type="similarity">
    <text evidence="1 7">Belongs to the NapD family.</text>
</comment>
<reference key="1">
    <citation type="submission" date="1993-10" db="EMBL/GenBank/DDBJ databases">
        <title>Automated multiplex sequencing of the E.coli genome.</title>
        <authorList>
            <person name="Richterich P."/>
            <person name="Lakey N."/>
            <person name="Gryan G."/>
            <person name="Jaehn L."/>
            <person name="Mintz L."/>
            <person name="Robison K."/>
            <person name="Church G.M."/>
        </authorList>
    </citation>
    <scope>NUCLEOTIDE SEQUENCE [LARGE SCALE GENOMIC DNA]</scope>
    <source>
        <strain>K12 / BHB2600</strain>
    </source>
</reference>
<reference key="2">
    <citation type="journal article" date="1996" name="DNA Res.">
        <title>A 460-kb DNA sequence of the Escherichia coli K-12 genome corresponding to the 40.1-50.0 min region on the linkage map.</title>
        <authorList>
            <person name="Itoh T."/>
            <person name="Aiba H."/>
            <person name="Baba T."/>
            <person name="Fujita K."/>
            <person name="Hayashi K."/>
            <person name="Inada T."/>
            <person name="Isono K."/>
            <person name="Kasai H."/>
            <person name="Kimura S."/>
            <person name="Kitakawa M."/>
            <person name="Kitagawa M."/>
            <person name="Makino K."/>
            <person name="Miki T."/>
            <person name="Mizobuchi K."/>
            <person name="Mori H."/>
            <person name="Mori T."/>
            <person name="Motomura K."/>
            <person name="Nakade S."/>
            <person name="Nakamura Y."/>
            <person name="Nashimoto H."/>
            <person name="Nishio Y."/>
            <person name="Oshima T."/>
            <person name="Saito N."/>
            <person name="Sampei G."/>
            <person name="Seki Y."/>
            <person name="Sivasundaram S."/>
            <person name="Tagami H."/>
            <person name="Takeda J."/>
            <person name="Takemoto K."/>
            <person name="Wada C."/>
            <person name="Yamamoto Y."/>
            <person name="Horiuchi T."/>
        </authorList>
    </citation>
    <scope>NUCLEOTIDE SEQUENCE [LARGE SCALE GENOMIC DNA]</scope>
    <source>
        <strain>K12 / W3110 / ATCC 27325 / DSM 5911</strain>
    </source>
</reference>
<reference key="3">
    <citation type="journal article" date="1997" name="Science">
        <title>The complete genome sequence of Escherichia coli K-12.</title>
        <authorList>
            <person name="Blattner F.R."/>
            <person name="Plunkett G. III"/>
            <person name="Bloch C.A."/>
            <person name="Perna N.T."/>
            <person name="Burland V."/>
            <person name="Riley M."/>
            <person name="Collado-Vides J."/>
            <person name="Glasner J.D."/>
            <person name="Rode C.K."/>
            <person name="Mayhew G.F."/>
            <person name="Gregor J."/>
            <person name="Davis N.W."/>
            <person name="Kirkpatrick H.A."/>
            <person name="Goeden M.A."/>
            <person name="Rose D.J."/>
            <person name="Mau B."/>
            <person name="Shao Y."/>
        </authorList>
    </citation>
    <scope>NUCLEOTIDE SEQUENCE [LARGE SCALE GENOMIC DNA]</scope>
    <source>
        <strain>K12 / MG1655 / ATCC 47076</strain>
    </source>
</reference>
<reference key="4">
    <citation type="journal article" date="2006" name="Mol. Syst. Biol.">
        <title>Highly accurate genome sequences of Escherichia coli K-12 strains MG1655 and W3110.</title>
        <authorList>
            <person name="Hayashi K."/>
            <person name="Morooka N."/>
            <person name="Yamamoto Y."/>
            <person name="Fujita K."/>
            <person name="Isono K."/>
            <person name="Choi S."/>
            <person name="Ohtsubo E."/>
            <person name="Baba T."/>
            <person name="Wanner B.L."/>
            <person name="Mori H."/>
            <person name="Horiuchi T."/>
        </authorList>
    </citation>
    <scope>NUCLEOTIDE SEQUENCE [LARGE SCALE GENOMIC DNA]</scope>
    <source>
        <strain>K12 / W3110 / ATCC 27325 / DSM 5911</strain>
    </source>
</reference>
<reference key="5">
    <citation type="journal article" date="1999" name="Biochem. J.">
        <title>Essential roles for the products of the napABCD genes, but not napFGH, in periplasmic nitrate reduction by Escherichia coli K-12.</title>
        <authorList>
            <person name="Potter L.C."/>
            <person name="Cole J.A."/>
        </authorList>
    </citation>
    <scope>DISRUPTION PHENOTYPE</scope>
    <source>
        <strain>K12</strain>
    </source>
</reference>
<reference key="6">
    <citation type="journal article" date="2012" name="Mol. Microbiol.">
        <title>Overlapping transport and chaperone-binding functions within a bacterial twin-arginine signal peptide.</title>
        <authorList>
            <person name="Grahl S."/>
            <person name="Maillard J."/>
            <person name="Spronk C.A."/>
            <person name="Vuister G.W."/>
            <person name="Sargent F."/>
        </authorList>
    </citation>
    <scope>FUNCTION</scope>
    <scope>INTERACTION WITH NAPA</scope>
</reference>
<reference key="7">
    <citation type="journal article" date="2014" name="FEBS J.">
        <title>Characterization of a periplasmic nitrate reductase in complex with its biosynthetic chaperone.</title>
        <authorList>
            <person name="Dow J.M."/>
            <person name="Grahl S."/>
            <person name="Ward R."/>
            <person name="Evans R."/>
            <person name="Byron O."/>
            <person name="Norman D.G."/>
            <person name="Palmer T."/>
            <person name="Sargent F."/>
        </authorList>
    </citation>
    <scope>FUNCTION</scope>
    <scope>INTERACTION WITH NAPA</scope>
</reference>
<reference evidence="8" key="8">
    <citation type="journal article" date="2007" name="Proc. Natl. Acad. Sci. U.S.A.">
        <title>Structural diversity in twin-arginine signal peptide-binding proteins.</title>
        <authorList>
            <person name="Maillard J."/>
            <person name="Spronk C.A."/>
            <person name="Buchanan G."/>
            <person name="Lyall V."/>
            <person name="Richardson D.J."/>
            <person name="Palmer T."/>
            <person name="Vuister G.W."/>
            <person name="Sargent F."/>
        </authorList>
    </citation>
    <scope>STRUCTURE BY NMR</scope>
    <scope>FUNCTION</scope>
    <scope>SUBUNIT</scope>
    <scope>INTERACTION WITH NAPA</scope>
    <scope>SUBCELLULAR LOCATION</scope>
</reference>
<reference evidence="9" key="9">
    <citation type="submission" date="2007-05" db="PDB data bank">
        <title>Solution structure of NapD, a private chaperone of periplasmic nitrate reductase NapA/B, in complex with NapA1-35 signal peptide.</title>
        <authorList>
            <person name="Minailiuc O.M."/>
            <person name="Ekiel I."/>
            <person name="Cheng J."/>
            <person name="Milad M."/>
            <person name="Gandhi S."/>
            <person name="Larocque R."/>
            <person name="Cygler M."/>
            <person name="Matte A."/>
        </authorList>
    </citation>
    <scope>STRUCTURE BY NMR IN COMPLEX WITH NAPA SIGNAL PEPTIDE</scope>
</reference>
<keyword id="KW-0002">3D-structure</keyword>
<keyword id="KW-0143">Chaperone</keyword>
<keyword id="KW-0963">Cytoplasm</keyword>
<keyword id="KW-1185">Reference proteome</keyword>
<dbReference type="EMBL" id="U00008">
    <property type="protein sequence ID" value="AAA16400.1"/>
    <property type="molecule type" value="Genomic_DNA"/>
</dbReference>
<dbReference type="EMBL" id="U00096">
    <property type="protein sequence ID" value="AAC75267.1"/>
    <property type="molecule type" value="Genomic_DNA"/>
</dbReference>
<dbReference type="EMBL" id="AP009048">
    <property type="protein sequence ID" value="BAA15990.1"/>
    <property type="molecule type" value="Genomic_DNA"/>
</dbReference>
<dbReference type="PIR" id="E64990">
    <property type="entry name" value="E64990"/>
</dbReference>
<dbReference type="RefSeq" id="NP_416711.1">
    <property type="nucleotide sequence ID" value="NC_000913.3"/>
</dbReference>
<dbReference type="RefSeq" id="WP_000557378.1">
    <property type="nucleotide sequence ID" value="NZ_STEB01000002.1"/>
</dbReference>
<dbReference type="PDB" id="2JSX">
    <property type="method" value="NMR"/>
    <property type="chains" value="A=1-87"/>
</dbReference>
<dbReference type="PDB" id="2PQ4">
    <property type="method" value="NMR"/>
    <property type="chains" value="A=1-87"/>
</dbReference>
<dbReference type="PDBsum" id="2JSX"/>
<dbReference type="PDBsum" id="2PQ4"/>
<dbReference type="BMRB" id="P0A9I5"/>
<dbReference type="SMR" id="P0A9I5"/>
<dbReference type="BioGRID" id="4262220">
    <property type="interactions" value="174"/>
</dbReference>
<dbReference type="BioGRID" id="849573">
    <property type="interactions" value="2"/>
</dbReference>
<dbReference type="DIP" id="DIP-46322N"/>
<dbReference type="FunCoup" id="P0A9I5">
    <property type="interactions" value="225"/>
</dbReference>
<dbReference type="IntAct" id="P0A9I5">
    <property type="interactions" value="22"/>
</dbReference>
<dbReference type="MINT" id="P0A9I5"/>
<dbReference type="STRING" id="511145.b2207"/>
<dbReference type="TCDB" id="3.D.11.1.1">
    <property type="family name" value="the periplasmic nitrate reductase complex (nap) complex family"/>
</dbReference>
<dbReference type="PaxDb" id="511145-b2207"/>
<dbReference type="EnsemblBacteria" id="AAC75267">
    <property type="protein sequence ID" value="AAC75267"/>
    <property type="gene ID" value="b2207"/>
</dbReference>
<dbReference type="GeneID" id="93774971"/>
<dbReference type="GeneID" id="945187"/>
<dbReference type="KEGG" id="ecj:JW2195"/>
<dbReference type="KEGG" id="eco:b2207"/>
<dbReference type="KEGG" id="ecoc:C3026_12330"/>
<dbReference type="PATRIC" id="fig|1411691.4.peg.29"/>
<dbReference type="EchoBASE" id="EB2064"/>
<dbReference type="eggNOG" id="COG3062">
    <property type="taxonomic scope" value="Bacteria"/>
</dbReference>
<dbReference type="HOGENOM" id="CLU_155794_1_0_6"/>
<dbReference type="InParanoid" id="P0A9I5"/>
<dbReference type="OMA" id="ENQGFIT"/>
<dbReference type="OrthoDB" id="6455702at2"/>
<dbReference type="PhylomeDB" id="P0A9I5"/>
<dbReference type="BioCyc" id="EcoCyc:NAPD-MONOMER"/>
<dbReference type="BioCyc" id="MetaCyc:NAPD-MONOMER"/>
<dbReference type="EvolutionaryTrace" id="P0A9I5"/>
<dbReference type="PHI-base" id="PHI:10521"/>
<dbReference type="PRO" id="PR:P0A9I5"/>
<dbReference type="Proteomes" id="UP000000625">
    <property type="component" value="Chromosome"/>
</dbReference>
<dbReference type="GO" id="GO:0005737">
    <property type="term" value="C:cytoplasm"/>
    <property type="evidence" value="ECO:0000314"/>
    <property type="project" value="EcoCyc"/>
</dbReference>
<dbReference type="GO" id="GO:0005048">
    <property type="term" value="F:signal sequence binding"/>
    <property type="evidence" value="ECO:0000353"/>
    <property type="project" value="EcoCyc"/>
</dbReference>
<dbReference type="GO" id="GO:0051224">
    <property type="term" value="P:negative regulation of protein transport"/>
    <property type="evidence" value="ECO:0000314"/>
    <property type="project" value="EcoCyc"/>
</dbReference>
<dbReference type="FunFam" id="3.30.70.920:FF:000004">
    <property type="entry name" value="Chaperone NapD"/>
    <property type="match status" value="1"/>
</dbReference>
<dbReference type="Gene3D" id="3.30.70.920">
    <property type="match status" value="1"/>
</dbReference>
<dbReference type="HAMAP" id="MF_02200">
    <property type="entry name" value="NapD"/>
    <property type="match status" value="1"/>
</dbReference>
<dbReference type="InterPro" id="IPR005623">
    <property type="entry name" value="Chaperone_NapD_NO3_reduct"/>
</dbReference>
<dbReference type="NCBIfam" id="NF007840">
    <property type="entry name" value="PRK10553.1"/>
    <property type="match status" value="1"/>
</dbReference>
<dbReference type="PANTHER" id="PTHR38603">
    <property type="entry name" value="CHAPERONE NAPD"/>
    <property type="match status" value="1"/>
</dbReference>
<dbReference type="PANTHER" id="PTHR38603:SF1">
    <property type="entry name" value="CHAPERONE NAPD"/>
    <property type="match status" value="1"/>
</dbReference>
<dbReference type="Pfam" id="PF03927">
    <property type="entry name" value="NapD"/>
    <property type="match status" value="1"/>
</dbReference>
<organism>
    <name type="scientific">Escherichia coli (strain K12)</name>
    <dbReference type="NCBI Taxonomy" id="83333"/>
    <lineage>
        <taxon>Bacteria</taxon>
        <taxon>Pseudomonadati</taxon>
        <taxon>Pseudomonadota</taxon>
        <taxon>Gammaproteobacteria</taxon>
        <taxon>Enterobacterales</taxon>
        <taxon>Enterobacteriaceae</taxon>
        <taxon>Escherichia</taxon>
    </lineage>
</organism>
<feature type="chain" id="PRO_0000096713" description="Chaperone NapD">
    <location>
        <begin position="1"/>
        <end position="87"/>
    </location>
</feature>
<feature type="strand" evidence="10">
    <location>
        <begin position="6"/>
        <end position="14"/>
    </location>
</feature>
<feature type="helix" evidence="10">
    <location>
        <begin position="19"/>
        <end position="26"/>
    </location>
</feature>
<feature type="strand" evidence="11">
    <location>
        <begin position="29"/>
        <end position="31"/>
    </location>
</feature>
<feature type="strand" evidence="10">
    <location>
        <begin position="32"/>
        <end position="38"/>
    </location>
</feature>
<feature type="turn" evidence="10">
    <location>
        <begin position="39"/>
        <end position="42"/>
    </location>
</feature>
<feature type="strand" evidence="10">
    <location>
        <begin position="43"/>
        <end position="52"/>
    </location>
</feature>
<feature type="helix" evidence="10">
    <location>
        <begin position="53"/>
        <end position="63"/>
    </location>
</feature>
<feature type="strand" evidence="10">
    <location>
        <begin position="69"/>
        <end position="76"/>
    </location>
</feature>
<accession>P0A9I5</accession>
<accession>P33938</accession>
<protein>
    <recommendedName>
        <fullName evidence="1 7">Chaperone NapD</fullName>
    </recommendedName>
    <alternativeName>
        <fullName evidence="1 7">NapA signal peptide-binding chaperone NapD</fullName>
    </alternativeName>
</protein>
<name>NAPD_ECOLI</name>